<proteinExistence type="inferred from homology"/>
<sequence length="350" mass="38308">MIDTDRLIAAQPQGSEVHVDHAIRPRRLAEYIGQPRVREQLDIFISAARKRGDSLDHTLVFGPPGLGKTTLANIIAAEMDVDIKSTSGPVLERAGDLAAMLTNLQAGDVLFIDEIHRLPASVEEVLYPAMEDYQLDIMIGEGPAARSIKLDLPAFTLVGATTRAGLLTSPLRDRFGIVQRLEFYAVEELTEIVVRSAHLLGVDAERDGAAEIARRARGTPRIANRLLRRVRDFAEVRGDGRLTAAIADQALNMLHVDRHGLDHMDRRLLMAMIEKFDGGPVGVDSLAAAISEERDTIEDVLEPYLIQQGFMMRTARGRVVTRSAYEHFGLTPTDAVATAVPLTPPGESDA</sequence>
<feature type="chain" id="PRO_1000001387" description="Holliday junction branch migration complex subunit RuvB">
    <location>
        <begin position="1"/>
        <end position="350"/>
    </location>
</feature>
<feature type="region of interest" description="Large ATPase domain (RuvB-L)" evidence="1">
    <location>
        <begin position="4"/>
        <end position="184"/>
    </location>
</feature>
<feature type="region of interest" description="Small ATPAse domain (RuvB-S)" evidence="1">
    <location>
        <begin position="185"/>
        <end position="255"/>
    </location>
</feature>
<feature type="region of interest" description="Head domain (RuvB-H)" evidence="1">
    <location>
        <begin position="258"/>
        <end position="350"/>
    </location>
</feature>
<feature type="binding site" evidence="1">
    <location>
        <position position="23"/>
    </location>
    <ligand>
        <name>ATP</name>
        <dbReference type="ChEBI" id="CHEBI:30616"/>
    </ligand>
</feature>
<feature type="binding site" evidence="1">
    <location>
        <position position="24"/>
    </location>
    <ligand>
        <name>ATP</name>
        <dbReference type="ChEBI" id="CHEBI:30616"/>
    </ligand>
</feature>
<feature type="binding site" evidence="1">
    <location>
        <position position="65"/>
    </location>
    <ligand>
        <name>ATP</name>
        <dbReference type="ChEBI" id="CHEBI:30616"/>
    </ligand>
</feature>
<feature type="binding site" evidence="1">
    <location>
        <position position="68"/>
    </location>
    <ligand>
        <name>ATP</name>
        <dbReference type="ChEBI" id="CHEBI:30616"/>
    </ligand>
</feature>
<feature type="binding site" evidence="1">
    <location>
        <position position="69"/>
    </location>
    <ligand>
        <name>ATP</name>
        <dbReference type="ChEBI" id="CHEBI:30616"/>
    </ligand>
</feature>
<feature type="binding site" evidence="1">
    <location>
        <position position="69"/>
    </location>
    <ligand>
        <name>Mg(2+)</name>
        <dbReference type="ChEBI" id="CHEBI:18420"/>
    </ligand>
</feature>
<feature type="binding site" evidence="1">
    <location>
        <position position="70"/>
    </location>
    <ligand>
        <name>ATP</name>
        <dbReference type="ChEBI" id="CHEBI:30616"/>
    </ligand>
</feature>
<feature type="binding site" evidence="1">
    <location>
        <begin position="131"/>
        <end position="133"/>
    </location>
    <ligand>
        <name>ATP</name>
        <dbReference type="ChEBI" id="CHEBI:30616"/>
    </ligand>
</feature>
<feature type="binding site" evidence="1">
    <location>
        <position position="174"/>
    </location>
    <ligand>
        <name>ATP</name>
        <dbReference type="ChEBI" id="CHEBI:30616"/>
    </ligand>
</feature>
<feature type="binding site" evidence="1">
    <location>
        <position position="184"/>
    </location>
    <ligand>
        <name>ATP</name>
        <dbReference type="ChEBI" id="CHEBI:30616"/>
    </ligand>
</feature>
<feature type="binding site" evidence="1">
    <location>
        <position position="221"/>
    </location>
    <ligand>
        <name>ATP</name>
        <dbReference type="ChEBI" id="CHEBI:30616"/>
    </ligand>
</feature>
<feature type="binding site" evidence="1">
    <location>
        <position position="294"/>
    </location>
    <ligand>
        <name>DNA</name>
        <dbReference type="ChEBI" id="CHEBI:16991"/>
    </ligand>
</feature>
<feature type="binding site" evidence="1">
    <location>
        <position position="313"/>
    </location>
    <ligand>
        <name>DNA</name>
        <dbReference type="ChEBI" id="CHEBI:16991"/>
    </ligand>
</feature>
<feature type="binding site" evidence="1">
    <location>
        <position position="318"/>
    </location>
    <ligand>
        <name>DNA</name>
        <dbReference type="ChEBI" id="CHEBI:16991"/>
    </ligand>
</feature>
<dbReference type="EC" id="3.6.4.-" evidence="1"/>
<dbReference type="EMBL" id="CP000285">
    <property type="protein sequence ID" value="ABE59200.1"/>
    <property type="molecule type" value="Genomic_DNA"/>
</dbReference>
<dbReference type="RefSeq" id="WP_011507146.1">
    <property type="nucleotide sequence ID" value="NC_007963.1"/>
</dbReference>
<dbReference type="SMR" id="Q1QWF8"/>
<dbReference type="STRING" id="290398.Csal_1848"/>
<dbReference type="GeneID" id="95334565"/>
<dbReference type="KEGG" id="csa:Csal_1848"/>
<dbReference type="eggNOG" id="COG2255">
    <property type="taxonomic scope" value="Bacteria"/>
</dbReference>
<dbReference type="HOGENOM" id="CLU_055599_1_0_6"/>
<dbReference type="OrthoDB" id="9804478at2"/>
<dbReference type="Proteomes" id="UP000000239">
    <property type="component" value="Chromosome"/>
</dbReference>
<dbReference type="GO" id="GO:0005737">
    <property type="term" value="C:cytoplasm"/>
    <property type="evidence" value="ECO:0007669"/>
    <property type="project" value="UniProtKB-SubCell"/>
</dbReference>
<dbReference type="GO" id="GO:0048476">
    <property type="term" value="C:Holliday junction resolvase complex"/>
    <property type="evidence" value="ECO:0007669"/>
    <property type="project" value="UniProtKB-UniRule"/>
</dbReference>
<dbReference type="GO" id="GO:0005524">
    <property type="term" value="F:ATP binding"/>
    <property type="evidence" value="ECO:0007669"/>
    <property type="project" value="UniProtKB-UniRule"/>
</dbReference>
<dbReference type="GO" id="GO:0016887">
    <property type="term" value="F:ATP hydrolysis activity"/>
    <property type="evidence" value="ECO:0007669"/>
    <property type="project" value="InterPro"/>
</dbReference>
<dbReference type="GO" id="GO:0000400">
    <property type="term" value="F:four-way junction DNA binding"/>
    <property type="evidence" value="ECO:0007669"/>
    <property type="project" value="UniProtKB-UniRule"/>
</dbReference>
<dbReference type="GO" id="GO:0009378">
    <property type="term" value="F:four-way junction helicase activity"/>
    <property type="evidence" value="ECO:0007669"/>
    <property type="project" value="InterPro"/>
</dbReference>
<dbReference type="GO" id="GO:0006310">
    <property type="term" value="P:DNA recombination"/>
    <property type="evidence" value="ECO:0007669"/>
    <property type="project" value="UniProtKB-UniRule"/>
</dbReference>
<dbReference type="GO" id="GO:0006281">
    <property type="term" value="P:DNA repair"/>
    <property type="evidence" value="ECO:0007669"/>
    <property type="project" value="UniProtKB-UniRule"/>
</dbReference>
<dbReference type="CDD" id="cd00009">
    <property type="entry name" value="AAA"/>
    <property type="match status" value="1"/>
</dbReference>
<dbReference type="FunFam" id="1.10.10.10:FF:000086">
    <property type="entry name" value="Holliday junction ATP-dependent DNA helicase RuvB"/>
    <property type="match status" value="1"/>
</dbReference>
<dbReference type="FunFam" id="1.10.8.60:FF:000023">
    <property type="entry name" value="Holliday junction ATP-dependent DNA helicase RuvB"/>
    <property type="match status" value="1"/>
</dbReference>
<dbReference type="FunFam" id="3.40.50.300:FF:000073">
    <property type="entry name" value="Holliday junction ATP-dependent DNA helicase RuvB"/>
    <property type="match status" value="1"/>
</dbReference>
<dbReference type="Gene3D" id="1.10.8.60">
    <property type="match status" value="1"/>
</dbReference>
<dbReference type="Gene3D" id="3.40.50.300">
    <property type="entry name" value="P-loop containing nucleotide triphosphate hydrolases"/>
    <property type="match status" value="1"/>
</dbReference>
<dbReference type="Gene3D" id="1.10.10.10">
    <property type="entry name" value="Winged helix-like DNA-binding domain superfamily/Winged helix DNA-binding domain"/>
    <property type="match status" value="1"/>
</dbReference>
<dbReference type="HAMAP" id="MF_00016">
    <property type="entry name" value="DNA_HJ_migration_RuvB"/>
    <property type="match status" value="1"/>
</dbReference>
<dbReference type="InterPro" id="IPR003593">
    <property type="entry name" value="AAA+_ATPase"/>
</dbReference>
<dbReference type="InterPro" id="IPR041445">
    <property type="entry name" value="AAA_lid_4"/>
</dbReference>
<dbReference type="InterPro" id="IPR004605">
    <property type="entry name" value="DNA_helicase_Holl-junc_RuvB"/>
</dbReference>
<dbReference type="InterPro" id="IPR027417">
    <property type="entry name" value="P-loop_NTPase"/>
</dbReference>
<dbReference type="InterPro" id="IPR008824">
    <property type="entry name" value="RuvB-like_N"/>
</dbReference>
<dbReference type="InterPro" id="IPR008823">
    <property type="entry name" value="RuvB_C"/>
</dbReference>
<dbReference type="InterPro" id="IPR036388">
    <property type="entry name" value="WH-like_DNA-bd_sf"/>
</dbReference>
<dbReference type="InterPro" id="IPR036390">
    <property type="entry name" value="WH_DNA-bd_sf"/>
</dbReference>
<dbReference type="NCBIfam" id="NF000868">
    <property type="entry name" value="PRK00080.1"/>
    <property type="match status" value="1"/>
</dbReference>
<dbReference type="NCBIfam" id="TIGR00635">
    <property type="entry name" value="ruvB"/>
    <property type="match status" value="1"/>
</dbReference>
<dbReference type="PANTHER" id="PTHR42848">
    <property type="match status" value="1"/>
</dbReference>
<dbReference type="PANTHER" id="PTHR42848:SF1">
    <property type="entry name" value="HOLLIDAY JUNCTION BRANCH MIGRATION COMPLEX SUBUNIT RUVB"/>
    <property type="match status" value="1"/>
</dbReference>
<dbReference type="Pfam" id="PF17864">
    <property type="entry name" value="AAA_lid_4"/>
    <property type="match status" value="1"/>
</dbReference>
<dbReference type="Pfam" id="PF05491">
    <property type="entry name" value="RuvB_C"/>
    <property type="match status" value="1"/>
</dbReference>
<dbReference type="Pfam" id="PF05496">
    <property type="entry name" value="RuvB_N"/>
    <property type="match status" value="1"/>
</dbReference>
<dbReference type="SMART" id="SM00382">
    <property type="entry name" value="AAA"/>
    <property type="match status" value="1"/>
</dbReference>
<dbReference type="SUPFAM" id="SSF52540">
    <property type="entry name" value="P-loop containing nucleoside triphosphate hydrolases"/>
    <property type="match status" value="1"/>
</dbReference>
<dbReference type="SUPFAM" id="SSF46785">
    <property type="entry name" value="Winged helix' DNA-binding domain"/>
    <property type="match status" value="1"/>
</dbReference>
<comment type="function">
    <text evidence="1">The RuvA-RuvB-RuvC complex processes Holliday junction (HJ) DNA during genetic recombination and DNA repair, while the RuvA-RuvB complex plays an important role in the rescue of blocked DNA replication forks via replication fork reversal (RFR). RuvA specifically binds to HJ cruciform DNA, conferring on it an open structure. The RuvB hexamer acts as an ATP-dependent pump, pulling dsDNA into and through the RuvAB complex. RuvB forms 2 homohexamers on either side of HJ DNA bound by 1 or 2 RuvA tetramers; 4 subunits per hexamer contact DNA at a time. Coordinated motions by a converter formed by DNA-disengaged RuvB subunits stimulates ATP hydrolysis and nucleotide exchange. Immobilization of the converter enables RuvB to convert the ATP-contained energy into a lever motion, pulling 2 nucleotides of DNA out of the RuvA tetramer per ATP hydrolyzed, thus driving DNA branch migration. The RuvB motors rotate together with the DNA substrate, which together with the progressing nucleotide cycle form the mechanistic basis for DNA recombination by continuous HJ branch migration. Branch migration allows RuvC to scan DNA until it finds its consensus sequence, where it cleaves and resolves cruciform DNA.</text>
</comment>
<comment type="catalytic activity">
    <reaction evidence="1">
        <text>ATP + H2O = ADP + phosphate + H(+)</text>
        <dbReference type="Rhea" id="RHEA:13065"/>
        <dbReference type="ChEBI" id="CHEBI:15377"/>
        <dbReference type="ChEBI" id="CHEBI:15378"/>
        <dbReference type="ChEBI" id="CHEBI:30616"/>
        <dbReference type="ChEBI" id="CHEBI:43474"/>
        <dbReference type="ChEBI" id="CHEBI:456216"/>
    </reaction>
</comment>
<comment type="subunit">
    <text evidence="1">Homohexamer. Forms an RuvA(8)-RuvB(12)-Holliday junction (HJ) complex. HJ DNA is sandwiched between 2 RuvA tetramers; dsDNA enters through RuvA and exits via RuvB. An RuvB hexamer assembles on each DNA strand where it exits the tetramer. Each RuvB hexamer is contacted by two RuvA subunits (via domain III) on 2 adjacent RuvB subunits; this complex drives branch migration. In the full resolvosome a probable DNA-RuvA(4)-RuvB(12)-RuvC(2) complex forms which resolves the HJ.</text>
</comment>
<comment type="subcellular location">
    <subcellularLocation>
        <location evidence="1">Cytoplasm</location>
    </subcellularLocation>
</comment>
<comment type="domain">
    <text evidence="1">Has 3 domains, the large (RuvB-L) and small ATPase (RuvB-S) domains and the C-terminal head (RuvB-H) domain. The head domain binds DNA, while the ATPase domains jointly bind ATP, ADP or are empty depending on the state of the subunit in the translocation cycle. During a single DNA translocation step the structure of each domain remains the same, but their relative positions change.</text>
</comment>
<comment type="similarity">
    <text evidence="1">Belongs to the RuvB family.</text>
</comment>
<gene>
    <name evidence="1" type="primary">ruvB</name>
    <name type="ordered locus">Csal_1848</name>
</gene>
<evidence type="ECO:0000255" key="1">
    <source>
        <dbReference type="HAMAP-Rule" id="MF_00016"/>
    </source>
</evidence>
<accession>Q1QWF8</accession>
<name>RUVB_CHRSD</name>
<keyword id="KW-0067">ATP-binding</keyword>
<keyword id="KW-0963">Cytoplasm</keyword>
<keyword id="KW-0227">DNA damage</keyword>
<keyword id="KW-0233">DNA recombination</keyword>
<keyword id="KW-0234">DNA repair</keyword>
<keyword id="KW-0238">DNA-binding</keyword>
<keyword id="KW-0378">Hydrolase</keyword>
<keyword id="KW-0547">Nucleotide-binding</keyword>
<keyword id="KW-1185">Reference proteome</keyword>
<organism>
    <name type="scientific">Chromohalobacter salexigens (strain ATCC BAA-138 / DSM 3043 / CIP 106854 / NCIMB 13768 / 1H11)</name>
    <dbReference type="NCBI Taxonomy" id="290398"/>
    <lineage>
        <taxon>Bacteria</taxon>
        <taxon>Pseudomonadati</taxon>
        <taxon>Pseudomonadota</taxon>
        <taxon>Gammaproteobacteria</taxon>
        <taxon>Oceanospirillales</taxon>
        <taxon>Halomonadaceae</taxon>
        <taxon>Chromohalobacter</taxon>
    </lineage>
</organism>
<protein>
    <recommendedName>
        <fullName evidence="1">Holliday junction branch migration complex subunit RuvB</fullName>
        <ecNumber evidence="1">3.6.4.-</ecNumber>
    </recommendedName>
</protein>
<reference key="1">
    <citation type="journal article" date="2011" name="Stand. Genomic Sci.">
        <title>Complete genome sequence of the halophilic and highly halotolerant Chromohalobacter salexigens type strain (1H11(T)).</title>
        <authorList>
            <person name="Copeland A."/>
            <person name="O'Connor K."/>
            <person name="Lucas S."/>
            <person name="Lapidus A."/>
            <person name="Berry K.W."/>
            <person name="Detter J.C."/>
            <person name="Del Rio T.G."/>
            <person name="Hammon N."/>
            <person name="Dalin E."/>
            <person name="Tice H."/>
            <person name="Pitluck S."/>
            <person name="Bruce D."/>
            <person name="Goodwin L."/>
            <person name="Han C."/>
            <person name="Tapia R."/>
            <person name="Saunders E."/>
            <person name="Schmutz J."/>
            <person name="Brettin T."/>
            <person name="Larimer F."/>
            <person name="Land M."/>
            <person name="Hauser L."/>
            <person name="Vargas C."/>
            <person name="Nieto J.J."/>
            <person name="Kyrpides N.C."/>
            <person name="Ivanova N."/>
            <person name="Goker M."/>
            <person name="Klenk H.P."/>
            <person name="Csonka L.N."/>
            <person name="Woyke T."/>
        </authorList>
    </citation>
    <scope>NUCLEOTIDE SEQUENCE [LARGE SCALE GENOMIC DNA]</scope>
    <source>
        <strain>ATCC BAA-138 / DSM 3043 / CIP 106854 / NCIMB 13768 / 1H11</strain>
    </source>
</reference>